<accession>A1AM19</accession>
<keyword id="KW-1185">Reference proteome</keyword>
<keyword id="KW-0687">Ribonucleoprotein</keyword>
<keyword id="KW-0689">Ribosomal protein</keyword>
<keyword id="KW-0694">RNA-binding</keyword>
<keyword id="KW-0699">rRNA-binding</keyword>
<dbReference type="EMBL" id="CP000482">
    <property type="protein sequence ID" value="ABK98389.1"/>
    <property type="molecule type" value="Genomic_DNA"/>
</dbReference>
<dbReference type="RefSeq" id="WP_011734701.1">
    <property type="nucleotide sequence ID" value="NC_008609.1"/>
</dbReference>
<dbReference type="SMR" id="A1AM19"/>
<dbReference type="STRING" id="338966.Ppro_0759"/>
<dbReference type="KEGG" id="ppd:Ppro_0759"/>
<dbReference type="eggNOG" id="COG0238">
    <property type="taxonomic scope" value="Bacteria"/>
</dbReference>
<dbReference type="HOGENOM" id="CLU_148710_2_2_7"/>
<dbReference type="OrthoDB" id="9812008at2"/>
<dbReference type="Proteomes" id="UP000006732">
    <property type="component" value="Chromosome"/>
</dbReference>
<dbReference type="GO" id="GO:0022627">
    <property type="term" value="C:cytosolic small ribosomal subunit"/>
    <property type="evidence" value="ECO:0007669"/>
    <property type="project" value="TreeGrafter"/>
</dbReference>
<dbReference type="GO" id="GO:0070181">
    <property type="term" value="F:small ribosomal subunit rRNA binding"/>
    <property type="evidence" value="ECO:0007669"/>
    <property type="project" value="TreeGrafter"/>
</dbReference>
<dbReference type="GO" id="GO:0003735">
    <property type="term" value="F:structural constituent of ribosome"/>
    <property type="evidence" value="ECO:0007669"/>
    <property type="project" value="InterPro"/>
</dbReference>
<dbReference type="GO" id="GO:0006412">
    <property type="term" value="P:translation"/>
    <property type="evidence" value="ECO:0007669"/>
    <property type="project" value="UniProtKB-UniRule"/>
</dbReference>
<dbReference type="FunFam" id="4.10.640.10:FF:000004">
    <property type="entry name" value="30S ribosomal protein S18"/>
    <property type="match status" value="1"/>
</dbReference>
<dbReference type="Gene3D" id="4.10.640.10">
    <property type="entry name" value="Ribosomal protein S18"/>
    <property type="match status" value="1"/>
</dbReference>
<dbReference type="HAMAP" id="MF_00270">
    <property type="entry name" value="Ribosomal_bS18"/>
    <property type="match status" value="1"/>
</dbReference>
<dbReference type="InterPro" id="IPR001648">
    <property type="entry name" value="Ribosomal_bS18"/>
</dbReference>
<dbReference type="InterPro" id="IPR018275">
    <property type="entry name" value="Ribosomal_bS18_CS"/>
</dbReference>
<dbReference type="InterPro" id="IPR036870">
    <property type="entry name" value="Ribosomal_bS18_sf"/>
</dbReference>
<dbReference type="NCBIfam" id="TIGR00165">
    <property type="entry name" value="S18"/>
    <property type="match status" value="1"/>
</dbReference>
<dbReference type="PANTHER" id="PTHR13479">
    <property type="entry name" value="30S RIBOSOMAL PROTEIN S18"/>
    <property type="match status" value="1"/>
</dbReference>
<dbReference type="PANTHER" id="PTHR13479:SF40">
    <property type="entry name" value="SMALL RIBOSOMAL SUBUNIT PROTEIN BS18M"/>
    <property type="match status" value="1"/>
</dbReference>
<dbReference type="Pfam" id="PF01084">
    <property type="entry name" value="Ribosomal_S18"/>
    <property type="match status" value="1"/>
</dbReference>
<dbReference type="PRINTS" id="PR00974">
    <property type="entry name" value="RIBOSOMALS18"/>
</dbReference>
<dbReference type="SUPFAM" id="SSF46911">
    <property type="entry name" value="Ribosomal protein S18"/>
    <property type="match status" value="1"/>
</dbReference>
<dbReference type="PROSITE" id="PS00057">
    <property type="entry name" value="RIBOSOMAL_S18"/>
    <property type="match status" value="1"/>
</dbReference>
<evidence type="ECO:0000255" key="1">
    <source>
        <dbReference type="HAMAP-Rule" id="MF_00270"/>
    </source>
</evidence>
<evidence type="ECO:0000256" key="2">
    <source>
        <dbReference type="SAM" id="MobiDB-lite"/>
    </source>
</evidence>
<evidence type="ECO:0000305" key="3"/>
<gene>
    <name evidence="1" type="primary">rpsR</name>
    <name type="ordered locus">Ppro_0759</name>
</gene>
<feature type="chain" id="PRO_1000003554" description="Small ribosomal subunit protein bS18">
    <location>
        <begin position="1"/>
        <end position="94"/>
    </location>
</feature>
<feature type="region of interest" description="Disordered" evidence="2">
    <location>
        <begin position="1"/>
        <end position="24"/>
    </location>
</feature>
<feature type="compositionally biased region" description="Polar residues" evidence="2">
    <location>
        <begin position="1"/>
        <end position="11"/>
    </location>
</feature>
<comment type="function">
    <text evidence="1">Binds as a heterodimer with protein bS6 to the central domain of the 16S rRNA, where it helps stabilize the platform of the 30S subunit.</text>
</comment>
<comment type="subunit">
    <text evidence="1">Part of the 30S ribosomal subunit. Forms a tight heterodimer with protein bS6.</text>
</comment>
<comment type="similarity">
    <text evidence="1">Belongs to the bacterial ribosomal protein bS18 family.</text>
</comment>
<name>RS18_PELPD</name>
<protein>
    <recommendedName>
        <fullName evidence="1">Small ribosomal subunit protein bS18</fullName>
    </recommendedName>
    <alternativeName>
        <fullName evidence="3">30S ribosomal protein S18</fullName>
    </alternativeName>
</protein>
<proteinExistence type="inferred from homology"/>
<sequence length="94" mass="10940">MANERPTSQQRPAGGPRKRRPFQRRKVCRFCAEKNLTIDYKEPRTLRYFITERGKIVPRRISGNCSAHQREITEAIKRARNLALLPIASNHTLP</sequence>
<reference key="1">
    <citation type="submission" date="2006-10" db="EMBL/GenBank/DDBJ databases">
        <title>Complete sequence of chromosome of Pelobacter propionicus DSM 2379.</title>
        <authorList>
            <consortium name="US DOE Joint Genome Institute"/>
            <person name="Copeland A."/>
            <person name="Lucas S."/>
            <person name="Lapidus A."/>
            <person name="Barry K."/>
            <person name="Detter J.C."/>
            <person name="Glavina del Rio T."/>
            <person name="Hammon N."/>
            <person name="Israni S."/>
            <person name="Dalin E."/>
            <person name="Tice H."/>
            <person name="Pitluck S."/>
            <person name="Saunders E."/>
            <person name="Brettin T."/>
            <person name="Bruce D."/>
            <person name="Han C."/>
            <person name="Tapia R."/>
            <person name="Schmutz J."/>
            <person name="Larimer F."/>
            <person name="Land M."/>
            <person name="Hauser L."/>
            <person name="Kyrpides N."/>
            <person name="Kim E."/>
            <person name="Lovley D."/>
            <person name="Richardson P."/>
        </authorList>
    </citation>
    <scope>NUCLEOTIDE SEQUENCE [LARGE SCALE GENOMIC DNA]</scope>
    <source>
        <strain>DSM 2379 / NBRC 103807 / OttBd1</strain>
    </source>
</reference>
<organism>
    <name type="scientific">Pelobacter propionicus (strain DSM 2379 / NBRC 103807 / OttBd1)</name>
    <dbReference type="NCBI Taxonomy" id="338966"/>
    <lineage>
        <taxon>Bacteria</taxon>
        <taxon>Pseudomonadati</taxon>
        <taxon>Thermodesulfobacteriota</taxon>
        <taxon>Desulfuromonadia</taxon>
        <taxon>Desulfuromonadales</taxon>
        <taxon>Desulfuromonadaceae</taxon>
        <taxon>Pelobacter</taxon>
    </lineage>
</organism>